<reference key="1">
    <citation type="journal article" date="2005" name="Proc. Natl. Acad. Sci. U.S.A.">
        <title>The complete genome sequence of Mycobacterium avium subspecies paratuberculosis.</title>
        <authorList>
            <person name="Li L."/>
            <person name="Bannantine J.P."/>
            <person name="Zhang Q."/>
            <person name="Amonsin A."/>
            <person name="May B.J."/>
            <person name="Alt D."/>
            <person name="Banerji N."/>
            <person name="Kanjilal S."/>
            <person name="Kapur V."/>
        </authorList>
    </citation>
    <scope>NUCLEOTIDE SEQUENCE [LARGE SCALE GENOMIC DNA]</scope>
    <source>
        <strain>ATCC BAA-968 / K-10</strain>
    </source>
</reference>
<dbReference type="EMBL" id="AE016958">
    <property type="protein sequence ID" value="AAS02330.1"/>
    <property type="molecule type" value="Genomic_DNA"/>
</dbReference>
<dbReference type="RefSeq" id="WP_003872098.1">
    <property type="nucleotide sequence ID" value="NC_002944.2"/>
</dbReference>
<dbReference type="SMR" id="Q744R9"/>
<dbReference type="STRING" id="262316.MAP_0013c"/>
<dbReference type="GeneID" id="77299329"/>
<dbReference type="KEGG" id="mpa:MAP_0013c"/>
<dbReference type="eggNOG" id="ENOG5031Y35">
    <property type="taxonomic scope" value="Bacteria"/>
</dbReference>
<dbReference type="HOGENOM" id="CLU_149126_2_0_11"/>
<dbReference type="Proteomes" id="UP000000580">
    <property type="component" value="Chromosome"/>
</dbReference>
<dbReference type="GO" id="GO:0005886">
    <property type="term" value="C:plasma membrane"/>
    <property type="evidence" value="ECO:0007669"/>
    <property type="project" value="UniProtKB-SubCell"/>
</dbReference>
<dbReference type="GO" id="GO:0051301">
    <property type="term" value="P:cell division"/>
    <property type="evidence" value="ECO:0007669"/>
    <property type="project" value="UniProtKB-UniRule"/>
</dbReference>
<dbReference type="HAMAP" id="MF_00631">
    <property type="entry name" value="CrgA"/>
    <property type="match status" value="1"/>
</dbReference>
<dbReference type="InterPro" id="IPR009619">
    <property type="entry name" value="CrgA"/>
</dbReference>
<dbReference type="NCBIfam" id="NF001194">
    <property type="entry name" value="PRK00159.1"/>
    <property type="match status" value="1"/>
</dbReference>
<dbReference type="Pfam" id="PF06781">
    <property type="entry name" value="CrgA"/>
    <property type="match status" value="1"/>
</dbReference>
<keyword id="KW-0131">Cell cycle</keyword>
<keyword id="KW-0132">Cell division</keyword>
<keyword id="KW-1003">Cell membrane</keyword>
<keyword id="KW-0472">Membrane</keyword>
<keyword id="KW-1185">Reference proteome</keyword>
<keyword id="KW-0812">Transmembrane</keyword>
<keyword id="KW-1133">Transmembrane helix</keyword>
<proteinExistence type="inferred from homology"/>
<gene>
    <name evidence="1" type="primary">crgA</name>
    <name type="ordered locus">MAP_0013c</name>
</gene>
<accession>Q744R9</accession>
<comment type="function">
    <text evidence="1">Involved in cell division.</text>
</comment>
<comment type="subcellular location">
    <subcellularLocation>
        <location evidence="1">Cell membrane</location>
        <topology evidence="1">Multi-pass membrane protein</topology>
    </subcellularLocation>
</comment>
<comment type="similarity">
    <text evidence="1">Belongs to the CrgA family.</text>
</comment>
<feature type="chain" id="PRO_1000051703" description="Cell division protein CrgA">
    <location>
        <begin position="1"/>
        <end position="93"/>
    </location>
</feature>
<feature type="transmembrane region" description="Helical" evidence="1">
    <location>
        <begin position="31"/>
        <end position="51"/>
    </location>
</feature>
<feature type="transmembrane region" description="Helical" evidence="1">
    <location>
        <begin position="70"/>
        <end position="90"/>
    </location>
</feature>
<organism>
    <name type="scientific">Mycolicibacterium paratuberculosis (strain ATCC BAA-968 / K-10)</name>
    <name type="common">Mycobacterium paratuberculosis</name>
    <dbReference type="NCBI Taxonomy" id="262316"/>
    <lineage>
        <taxon>Bacteria</taxon>
        <taxon>Bacillati</taxon>
        <taxon>Actinomycetota</taxon>
        <taxon>Actinomycetes</taxon>
        <taxon>Mycobacteriales</taxon>
        <taxon>Mycobacteriaceae</taxon>
        <taxon>Mycobacterium</taxon>
        <taxon>Mycobacterium avium complex (MAC)</taxon>
    </lineage>
</organism>
<protein>
    <recommendedName>
        <fullName evidence="1">Cell division protein CrgA</fullName>
    </recommendedName>
</protein>
<evidence type="ECO:0000255" key="1">
    <source>
        <dbReference type="HAMAP-Rule" id="MF_00631"/>
    </source>
</evidence>
<name>CRGA_MYCPA</name>
<sequence>MPKSKVRKKNDFTVSAVSRTPVKVKVGPSSVWFVALFIGLMLIGLVWLMVFQLAAVGSQAPTALNWMAQLGPWNYAIAFAFMITGLLLTMRWH</sequence>